<sequence>MNLHEYQAKQLFARYGLPAPVGYACTTPREAEEAASKIGAGPWVVKCQVHAGGRGKAGGVKVVKSKEEIRAFAENWLGKRLVTYQTDANGQPVNQILVEAATDIGKELYLGAVVDRSSRRVVFMASTEGGVEIEKVAEETPHLIHKVALDPLTGPMPYQGRELAFKLGLEGKLVQQFTKIFMGLATIFLERDLALIEINPLVITKQGDLICLDGKLGADGNALFRQPDLREMRDQSQEDPREAQAAQWELNYVALDGNIGCMVNGAGLAMGTMDIVKLHGGEPANFLDVGGGATKERVTEAFKIILSDDNVKAVLVNIFGGIVRCDLIADGIIGAVEEVGVNVPVVVRLEGNNAELGAKKLADSGLNIIAAKSLTDAAQQVVAAVEGK</sequence>
<proteinExistence type="inferred from homology"/>
<reference key="1">
    <citation type="journal article" date="2005" name="Nucleic Acids Res.">
        <title>The genome sequence of Salmonella enterica serovar Choleraesuis, a highly invasive and resistant zoonotic pathogen.</title>
        <authorList>
            <person name="Chiu C.-H."/>
            <person name="Tang P."/>
            <person name="Chu C."/>
            <person name="Hu S."/>
            <person name="Bao Q."/>
            <person name="Yu J."/>
            <person name="Chou Y.-Y."/>
            <person name="Wang H.-S."/>
            <person name="Lee Y.-S."/>
        </authorList>
    </citation>
    <scope>NUCLEOTIDE SEQUENCE [LARGE SCALE GENOMIC DNA]</scope>
    <source>
        <strain>SC-B67</strain>
    </source>
</reference>
<protein>
    <recommendedName>
        <fullName evidence="1">Succinate--CoA ligase [ADP-forming] subunit beta</fullName>
        <ecNumber evidence="1">6.2.1.5</ecNumber>
    </recommendedName>
    <alternativeName>
        <fullName evidence="1">Succinyl-CoA synthetase subunit beta</fullName>
        <shortName evidence="1">SCS-beta</shortName>
    </alternativeName>
</protein>
<organism>
    <name type="scientific">Salmonella choleraesuis (strain SC-B67)</name>
    <dbReference type="NCBI Taxonomy" id="321314"/>
    <lineage>
        <taxon>Bacteria</taxon>
        <taxon>Pseudomonadati</taxon>
        <taxon>Pseudomonadota</taxon>
        <taxon>Gammaproteobacteria</taxon>
        <taxon>Enterobacterales</taxon>
        <taxon>Enterobacteriaceae</taxon>
        <taxon>Salmonella</taxon>
    </lineage>
</organism>
<feature type="chain" id="PRO_0000102853" description="Succinate--CoA ligase [ADP-forming] subunit beta">
    <location>
        <begin position="1"/>
        <end position="388"/>
    </location>
</feature>
<feature type="domain" description="ATP-grasp" evidence="1">
    <location>
        <begin position="9"/>
        <end position="244"/>
    </location>
</feature>
<feature type="binding site" evidence="1">
    <location>
        <position position="46"/>
    </location>
    <ligand>
        <name>ATP</name>
        <dbReference type="ChEBI" id="CHEBI:30616"/>
    </ligand>
</feature>
<feature type="binding site" evidence="1">
    <location>
        <begin position="53"/>
        <end position="55"/>
    </location>
    <ligand>
        <name>ATP</name>
        <dbReference type="ChEBI" id="CHEBI:30616"/>
    </ligand>
</feature>
<feature type="binding site" evidence="1">
    <location>
        <position position="99"/>
    </location>
    <ligand>
        <name>ATP</name>
        <dbReference type="ChEBI" id="CHEBI:30616"/>
    </ligand>
</feature>
<feature type="binding site" evidence="1">
    <location>
        <position position="102"/>
    </location>
    <ligand>
        <name>ATP</name>
        <dbReference type="ChEBI" id="CHEBI:30616"/>
    </ligand>
</feature>
<feature type="binding site" evidence="1">
    <location>
        <position position="107"/>
    </location>
    <ligand>
        <name>ATP</name>
        <dbReference type="ChEBI" id="CHEBI:30616"/>
    </ligand>
</feature>
<feature type="binding site" evidence="1">
    <location>
        <position position="199"/>
    </location>
    <ligand>
        <name>Mg(2+)</name>
        <dbReference type="ChEBI" id="CHEBI:18420"/>
    </ligand>
</feature>
<feature type="binding site" evidence="1">
    <location>
        <position position="213"/>
    </location>
    <ligand>
        <name>Mg(2+)</name>
        <dbReference type="ChEBI" id="CHEBI:18420"/>
    </ligand>
</feature>
<feature type="binding site" evidence="1">
    <location>
        <position position="264"/>
    </location>
    <ligand>
        <name>substrate</name>
        <note>ligand shared with subunit alpha</note>
    </ligand>
</feature>
<feature type="binding site" evidence="1">
    <location>
        <begin position="321"/>
        <end position="323"/>
    </location>
    <ligand>
        <name>substrate</name>
        <note>ligand shared with subunit alpha</note>
    </ligand>
</feature>
<dbReference type="EC" id="6.2.1.5" evidence="1"/>
<dbReference type="EMBL" id="AE017220">
    <property type="protein sequence ID" value="AAX64648.1"/>
    <property type="molecule type" value="Genomic_DNA"/>
</dbReference>
<dbReference type="RefSeq" id="WP_001048590.1">
    <property type="nucleotide sequence ID" value="NC_006905.1"/>
</dbReference>
<dbReference type="SMR" id="Q57RL3"/>
<dbReference type="KEGG" id="sec:SCH_0742"/>
<dbReference type="HOGENOM" id="CLU_037430_4_0_6"/>
<dbReference type="UniPathway" id="UPA00223">
    <property type="reaction ID" value="UER00999"/>
</dbReference>
<dbReference type="Proteomes" id="UP000000538">
    <property type="component" value="Chromosome"/>
</dbReference>
<dbReference type="GO" id="GO:0005829">
    <property type="term" value="C:cytosol"/>
    <property type="evidence" value="ECO:0007669"/>
    <property type="project" value="TreeGrafter"/>
</dbReference>
<dbReference type="GO" id="GO:0042709">
    <property type="term" value="C:succinate-CoA ligase complex"/>
    <property type="evidence" value="ECO:0007669"/>
    <property type="project" value="TreeGrafter"/>
</dbReference>
<dbReference type="GO" id="GO:0005524">
    <property type="term" value="F:ATP binding"/>
    <property type="evidence" value="ECO:0007669"/>
    <property type="project" value="UniProtKB-UniRule"/>
</dbReference>
<dbReference type="GO" id="GO:0000287">
    <property type="term" value="F:magnesium ion binding"/>
    <property type="evidence" value="ECO:0007669"/>
    <property type="project" value="UniProtKB-UniRule"/>
</dbReference>
<dbReference type="GO" id="GO:0004775">
    <property type="term" value="F:succinate-CoA ligase (ADP-forming) activity"/>
    <property type="evidence" value="ECO:0007669"/>
    <property type="project" value="UniProtKB-UniRule"/>
</dbReference>
<dbReference type="GO" id="GO:0004776">
    <property type="term" value="F:succinate-CoA ligase (GDP-forming) activity"/>
    <property type="evidence" value="ECO:0007669"/>
    <property type="project" value="RHEA"/>
</dbReference>
<dbReference type="GO" id="GO:0006104">
    <property type="term" value="P:succinyl-CoA metabolic process"/>
    <property type="evidence" value="ECO:0007669"/>
    <property type="project" value="TreeGrafter"/>
</dbReference>
<dbReference type="GO" id="GO:0006099">
    <property type="term" value="P:tricarboxylic acid cycle"/>
    <property type="evidence" value="ECO:0007669"/>
    <property type="project" value="UniProtKB-UniRule"/>
</dbReference>
<dbReference type="FunFam" id="3.30.1490.20:FF:000002">
    <property type="entry name" value="Succinate--CoA ligase [ADP-forming] subunit beta"/>
    <property type="match status" value="1"/>
</dbReference>
<dbReference type="FunFam" id="3.30.470.20:FF:000002">
    <property type="entry name" value="Succinate--CoA ligase [ADP-forming] subunit beta"/>
    <property type="match status" value="1"/>
</dbReference>
<dbReference type="FunFam" id="3.40.50.261:FF:000001">
    <property type="entry name" value="Succinate--CoA ligase [ADP-forming] subunit beta"/>
    <property type="match status" value="1"/>
</dbReference>
<dbReference type="Gene3D" id="3.30.1490.20">
    <property type="entry name" value="ATP-grasp fold, A domain"/>
    <property type="match status" value="1"/>
</dbReference>
<dbReference type="Gene3D" id="3.30.470.20">
    <property type="entry name" value="ATP-grasp fold, B domain"/>
    <property type="match status" value="1"/>
</dbReference>
<dbReference type="Gene3D" id="3.40.50.261">
    <property type="entry name" value="Succinyl-CoA synthetase domains"/>
    <property type="match status" value="1"/>
</dbReference>
<dbReference type="HAMAP" id="MF_00558">
    <property type="entry name" value="Succ_CoA_beta"/>
    <property type="match status" value="1"/>
</dbReference>
<dbReference type="InterPro" id="IPR011761">
    <property type="entry name" value="ATP-grasp"/>
</dbReference>
<dbReference type="InterPro" id="IPR013650">
    <property type="entry name" value="ATP-grasp_succ-CoA_synth-type"/>
</dbReference>
<dbReference type="InterPro" id="IPR013815">
    <property type="entry name" value="ATP_grasp_subdomain_1"/>
</dbReference>
<dbReference type="InterPro" id="IPR017866">
    <property type="entry name" value="Succ-CoA_synthase_bsu_CS"/>
</dbReference>
<dbReference type="InterPro" id="IPR005811">
    <property type="entry name" value="SUCC_ACL_C"/>
</dbReference>
<dbReference type="InterPro" id="IPR005809">
    <property type="entry name" value="Succ_CoA_ligase-like_bsu"/>
</dbReference>
<dbReference type="InterPro" id="IPR016102">
    <property type="entry name" value="Succinyl-CoA_synth-like"/>
</dbReference>
<dbReference type="NCBIfam" id="NF001913">
    <property type="entry name" value="PRK00696.1"/>
    <property type="match status" value="1"/>
</dbReference>
<dbReference type="NCBIfam" id="TIGR01016">
    <property type="entry name" value="sucCoAbeta"/>
    <property type="match status" value="1"/>
</dbReference>
<dbReference type="PANTHER" id="PTHR11815:SF10">
    <property type="entry name" value="SUCCINATE--COA LIGASE [GDP-FORMING] SUBUNIT BETA, MITOCHONDRIAL"/>
    <property type="match status" value="1"/>
</dbReference>
<dbReference type="PANTHER" id="PTHR11815">
    <property type="entry name" value="SUCCINYL-COA SYNTHETASE BETA CHAIN"/>
    <property type="match status" value="1"/>
</dbReference>
<dbReference type="Pfam" id="PF08442">
    <property type="entry name" value="ATP-grasp_2"/>
    <property type="match status" value="1"/>
</dbReference>
<dbReference type="Pfam" id="PF00549">
    <property type="entry name" value="Ligase_CoA"/>
    <property type="match status" value="1"/>
</dbReference>
<dbReference type="PIRSF" id="PIRSF001554">
    <property type="entry name" value="SucCS_beta"/>
    <property type="match status" value="1"/>
</dbReference>
<dbReference type="SUPFAM" id="SSF56059">
    <property type="entry name" value="Glutathione synthetase ATP-binding domain-like"/>
    <property type="match status" value="1"/>
</dbReference>
<dbReference type="SUPFAM" id="SSF52210">
    <property type="entry name" value="Succinyl-CoA synthetase domains"/>
    <property type="match status" value="1"/>
</dbReference>
<dbReference type="PROSITE" id="PS50975">
    <property type="entry name" value="ATP_GRASP"/>
    <property type="match status" value="1"/>
</dbReference>
<dbReference type="PROSITE" id="PS01217">
    <property type="entry name" value="SUCCINYL_COA_LIG_3"/>
    <property type="match status" value="1"/>
</dbReference>
<accession>Q57RL3</accession>
<evidence type="ECO:0000255" key="1">
    <source>
        <dbReference type="HAMAP-Rule" id="MF_00558"/>
    </source>
</evidence>
<comment type="function">
    <text evidence="1">Succinyl-CoA synthetase functions in the citric acid cycle (TCA), coupling the hydrolysis of succinyl-CoA to the synthesis of either ATP or GTP and thus represents the only step of substrate-level phosphorylation in the TCA. The beta subunit provides nucleotide specificity of the enzyme and binds the substrate succinate, while the binding sites for coenzyme A and phosphate are found in the alpha subunit.</text>
</comment>
<comment type="catalytic activity">
    <reaction evidence="1">
        <text>succinate + ATP + CoA = succinyl-CoA + ADP + phosphate</text>
        <dbReference type="Rhea" id="RHEA:17661"/>
        <dbReference type="ChEBI" id="CHEBI:30031"/>
        <dbReference type="ChEBI" id="CHEBI:30616"/>
        <dbReference type="ChEBI" id="CHEBI:43474"/>
        <dbReference type="ChEBI" id="CHEBI:57287"/>
        <dbReference type="ChEBI" id="CHEBI:57292"/>
        <dbReference type="ChEBI" id="CHEBI:456216"/>
        <dbReference type="EC" id="6.2.1.5"/>
    </reaction>
    <physiologicalReaction direction="right-to-left" evidence="1">
        <dbReference type="Rhea" id="RHEA:17663"/>
    </physiologicalReaction>
</comment>
<comment type="catalytic activity">
    <reaction evidence="1">
        <text>GTP + succinate + CoA = succinyl-CoA + GDP + phosphate</text>
        <dbReference type="Rhea" id="RHEA:22120"/>
        <dbReference type="ChEBI" id="CHEBI:30031"/>
        <dbReference type="ChEBI" id="CHEBI:37565"/>
        <dbReference type="ChEBI" id="CHEBI:43474"/>
        <dbReference type="ChEBI" id="CHEBI:57287"/>
        <dbReference type="ChEBI" id="CHEBI:57292"/>
        <dbReference type="ChEBI" id="CHEBI:58189"/>
    </reaction>
    <physiologicalReaction direction="right-to-left" evidence="1">
        <dbReference type="Rhea" id="RHEA:22122"/>
    </physiologicalReaction>
</comment>
<comment type="cofactor">
    <cofactor evidence="1">
        <name>Mg(2+)</name>
        <dbReference type="ChEBI" id="CHEBI:18420"/>
    </cofactor>
    <text evidence="1">Binds 1 Mg(2+) ion per subunit.</text>
</comment>
<comment type="pathway">
    <text evidence="1">Carbohydrate metabolism; tricarboxylic acid cycle; succinate from succinyl-CoA (ligase route): step 1/1.</text>
</comment>
<comment type="subunit">
    <text evidence="1">Heterotetramer of two alpha and two beta subunits.</text>
</comment>
<comment type="similarity">
    <text evidence="1">Belongs to the succinate/malate CoA ligase beta subunit family.</text>
</comment>
<name>SUCC_SALCH</name>
<gene>
    <name evidence="1" type="primary">sucC</name>
    <name type="ordered locus">SCH_0742</name>
</gene>
<keyword id="KW-0067">ATP-binding</keyword>
<keyword id="KW-0436">Ligase</keyword>
<keyword id="KW-0460">Magnesium</keyword>
<keyword id="KW-0479">Metal-binding</keyword>
<keyword id="KW-0547">Nucleotide-binding</keyword>
<keyword id="KW-0816">Tricarboxylic acid cycle</keyword>